<name>NOSZ_PSEAE</name>
<evidence type="ECO:0000250" key="1"/>
<evidence type="ECO:0000255" key="2"/>
<evidence type="ECO:0000256" key="3">
    <source>
        <dbReference type="SAM" id="MobiDB-lite"/>
    </source>
</evidence>
<evidence type="ECO:0000305" key="4"/>
<sequence>MSDDTKSPHEETHGLNRRGFLGASALTGAAALVGASALGSAVVGREARAAGKGERSKAEVAPGELDEYYGFWSGGHSGEVRVLGVPSMRELMRIPVFNVDSATGWGLTNESKRVLGDSARFLNGDCHHPHISMTDGKYDGKYLFINDKANSRVARIRLDVMKCDRIVTIPNVQAIHGLRLQKVPHTRYVFCNAEFIIPHPNDGSTFDLSGDNAFTLYNAIDAETMEVAWQVIVDGNLDNTDMDYSGRFAASTCYNSEKAVDLGGMMRNERDWVVVFDIPRIEAEIKAKRFVTLGDSKVPVVDGRRKDGKDSPVTRYIPVPKNPHGLNTSPDGKYFIANGKLSPTCTMIAIERLGDLFAGKLADPRDVVVGEPELGLGPLHTTFDGRGNAYTTLFIDSQLVKWNLADAVRAYKGEKVDYIRQKLDVQYQPGHNHATLCETSEADGKWIVVLSKFSKDRFLPTGPLHPENDQLIDISGEEMKLVHDGPTFAEPHDCILARRDQIKTRKIWDRKDPFFAETVKRAEKDGIDLMKDNKVIREGNKVRVYMVSMAPSFGLTEFKVKQGDEVTVTITNLDEIEDVTHGFVMVNHGVCMEISPQQTSSITFVADKPGVHWYYCSWFCHALHMEMCGRMLVEKA</sequence>
<dbReference type="EC" id="1.7.2.4"/>
<dbReference type="EMBL" id="AE004091">
    <property type="protein sequence ID" value="AAG06780.1"/>
    <property type="molecule type" value="Genomic_DNA"/>
</dbReference>
<dbReference type="PIR" id="C83222">
    <property type="entry name" value="C83222"/>
</dbReference>
<dbReference type="RefSeq" id="NP_252082.1">
    <property type="nucleotide sequence ID" value="NC_002516.2"/>
</dbReference>
<dbReference type="RefSeq" id="WP_003098686.1">
    <property type="nucleotide sequence ID" value="NZ_QZGE01000017.1"/>
</dbReference>
<dbReference type="SMR" id="Q9HYL2"/>
<dbReference type="STRING" id="208964.PA3392"/>
<dbReference type="PaxDb" id="208964-PA3392"/>
<dbReference type="GeneID" id="879824"/>
<dbReference type="KEGG" id="pae:PA3392"/>
<dbReference type="PATRIC" id="fig|208964.12.peg.3551"/>
<dbReference type="PseudoCAP" id="PA3392"/>
<dbReference type="HOGENOM" id="CLU_016420_0_0_6"/>
<dbReference type="InParanoid" id="Q9HYL2"/>
<dbReference type="OrthoDB" id="9759695at2"/>
<dbReference type="PhylomeDB" id="Q9HYL2"/>
<dbReference type="BioCyc" id="PAER208964:G1FZ6-3458-MONOMER"/>
<dbReference type="UniPathway" id="UPA00652">
    <property type="reaction ID" value="UER00709"/>
</dbReference>
<dbReference type="Proteomes" id="UP000002438">
    <property type="component" value="Chromosome"/>
</dbReference>
<dbReference type="GO" id="GO:0016020">
    <property type="term" value="C:membrane"/>
    <property type="evidence" value="ECO:0007669"/>
    <property type="project" value="InterPro"/>
</dbReference>
<dbReference type="GO" id="GO:0042597">
    <property type="term" value="C:periplasmic space"/>
    <property type="evidence" value="ECO:0007669"/>
    <property type="project" value="UniProtKB-SubCell"/>
</dbReference>
<dbReference type="GO" id="GO:0005509">
    <property type="term" value="F:calcium ion binding"/>
    <property type="evidence" value="ECO:0007669"/>
    <property type="project" value="UniProtKB-UniRule"/>
</dbReference>
<dbReference type="GO" id="GO:0005507">
    <property type="term" value="F:copper ion binding"/>
    <property type="evidence" value="ECO:0007669"/>
    <property type="project" value="UniProtKB-UniRule"/>
</dbReference>
<dbReference type="GO" id="GO:0004129">
    <property type="term" value="F:cytochrome-c oxidase activity"/>
    <property type="evidence" value="ECO:0007669"/>
    <property type="project" value="InterPro"/>
</dbReference>
<dbReference type="GO" id="GO:0050304">
    <property type="term" value="F:nitrous-oxide reductase activity"/>
    <property type="evidence" value="ECO:0007669"/>
    <property type="project" value="UniProtKB-UniRule"/>
</dbReference>
<dbReference type="GO" id="GO:0019333">
    <property type="term" value="P:denitrification pathway"/>
    <property type="evidence" value="ECO:0007669"/>
    <property type="project" value="UniProtKB-UniPathway"/>
</dbReference>
<dbReference type="CDD" id="cd04223">
    <property type="entry name" value="N2OR_C"/>
    <property type="match status" value="1"/>
</dbReference>
<dbReference type="FunFam" id="2.130.10.10:FF:001102">
    <property type="entry name" value="Nitrous-oxide reductase"/>
    <property type="match status" value="1"/>
</dbReference>
<dbReference type="FunFam" id="2.60.40.420:FF:000095">
    <property type="entry name" value="Nitrous-oxide reductase"/>
    <property type="match status" value="1"/>
</dbReference>
<dbReference type="Gene3D" id="2.60.40.420">
    <property type="entry name" value="Cupredoxins - blue copper proteins"/>
    <property type="match status" value="1"/>
</dbReference>
<dbReference type="Gene3D" id="2.130.10.10">
    <property type="entry name" value="YVTN repeat-like/Quinoprotein amine dehydrogenase"/>
    <property type="match status" value="1"/>
</dbReference>
<dbReference type="HAMAP" id="MF_00716">
    <property type="entry name" value="NosZ"/>
    <property type="match status" value="1"/>
</dbReference>
<dbReference type="InterPro" id="IPR002429">
    <property type="entry name" value="CcO_II-like_C"/>
</dbReference>
<dbReference type="InterPro" id="IPR001505">
    <property type="entry name" value="Copper_CuA"/>
</dbReference>
<dbReference type="InterPro" id="IPR008972">
    <property type="entry name" value="Cupredoxin"/>
</dbReference>
<dbReference type="InterPro" id="IPR011045">
    <property type="entry name" value="N2O_reductase_N"/>
</dbReference>
<dbReference type="InterPro" id="IPR034205">
    <property type="entry name" value="N2OR_C"/>
</dbReference>
<dbReference type="InterPro" id="IPR023644">
    <property type="entry name" value="NO_Rdtase"/>
</dbReference>
<dbReference type="InterPro" id="IPR041114">
    <property type="entry name" value="Nos_propeller"/>
</dbReference>
<dbReference type="InterPro" id="IPR041142">
    <property type="entry name" value="NOS_propeller_2"/>
</dbReference>
<dbReference type="InterPro" id="IPR051403">
    <property type="entry name" value="NosZ/Cyto_c_oxidase_sub2"/>
</dbReference>
<dbReference type="InterPro" id="IPR006311">
    <property type="entry name" value="TAT_signal"/>
</dbReference>
<dbReference type="InterPro" id="IPR019546">
    <property type="entry name" value="TAT_signal_bac_arc"/>
</dbReference>
<dbReference type="InterPro" id="IPR015943">
    <property type="entry name" value="WD40/YVTN_repeat-like_dom_sf"/>
</dbReference>
<dbReference type="NCBIfam" id="TIGR04244">
    <property type="entry name" value="nitrous_NosZ_RR"/>
    <property type="match status" value="1"/>
</dbReference>
<dbReference type="NCBIfam" id="TIGR01409">
    <property type="entry name" value="TAT_signal_seq"/>
    <property type="match status" value="1"/>
</dbReference>
<dbReference type="PANTHER" id="PTHR42838">
    <property type="entry name" value="CYTOCHROME C OXIDASE SUBUNIT II"/>
    <property type="match status" value="1"/>
</dbReference>
<dbReference type="PANTHER" id="PTHR42838:SF2">
    <property type="entry name" value="NITROUS-OXIDE REDUCTASE"/>
    <property type="match status" value="1"/>
</dbReference>
<dbReference type="Pfam" id="PF00116">
    <property type="entry name" value="COX2"/>
    <property type="match status" value="1"/>
</dbReference>
<dbReference type="Pfam" id="PF18764">
    <property type="entry name" value="nos_propeller"/>
    <property type="match status" value="1"/>
</dbReference>
<dbReference type="Pfam" id="PF18793">
    <property type="entry name" value="nos_propeller_2"/>
    <property type="match status" value="1"/>
</dbReference>
<dbReference type="SUPFAM" id="SSF49503">
    <property type="entry name" value="Cupredoxins"/>
    <property type="match status" value="1"/>
</dbReference>
<dbReference type="SUPFAM" id="SSF50974">
    <property type="entry name" value="Nitrous oxide reductase, N-terminal domain"/>
    <property type="match status" value="1"/>
</dbReference>
<dbReference type="PROSITE" id="PS00078">
    <property type="entry name" value="COX2"/>
    <property type="match status" value="1"/>
</dbReference>
<dbReference type="PROSITE" id="PS50857">
    <property type="entry name" value="COX2_CUA"/>
    <property type="match status" value="1"/>
</dbReference>
<dbReference type="PROSITE" id="PS51318">
    <property type="entry name" value="TAT"/>
    <property type="match status" value="1"/>
</dbReference>
<organism>
    <name type="scientific">Pseudomonas aeruginosa (strain ATCC 15692 / DSM 22644 / CIP 104116 / JCM 14847 / LMG 12228 / 1C / PRS 101 / PAO1)</name>
    <dbReference type="NCBI Taxonomy" id="208964"/>
    <lineage>
        <taxon>Bacteria</taxon>
        <taxon>Pseudomonadati</taxon>
        <taxon>Pseudomonadota</taxon>
        <taxon>Gammaproteobacteria</taxon>
        <taxon>Pseudomonadales</taxon>
        <taxon>Pseudomonadaceae</taxon>
        <taxon>Pseudomonas</taxon>
    </lineage>
</organism>
<feature type="signal peptide" description="Tat-type signal" evidence="2">
    <location>
        <begin position="1"/>
        <end position="49"/>
    </location>
</feature>
<feature type="chain" id="PRO_0000019828" description="Nitrous-oxide reductase">
    <location>
        <begin position="50"/>
        <end position="636"/>
    </location>
</feature>
<feature type="region of interest" description="Disordered" evidence="3">
    <location>
        <begin position="302"/>
        <end position="322"/>
    </location>
</feature>
<feature type="region of interest" description="COX2-like">
    <location>
        <begin position="540"/>
        <end position="636"/>
    </location>
</feature>
<feature type="compositionally biased region" description="Basic and acidic residues" evidence="3">
    <location>
        <begin position="302"/>
        <end position="312"/>
    </location>
</feature>
<feature type="binding site" evidence="1">
    <location>
        <position position="127"/>
    </location>
    <ligand>
        <name>Cu cation</name>
        <dbReference type="ChEBI" id="CHEBI:23378"/>
        <label>Z2</label>
    </ligand>
</feature>
<feature type="binding site" evidence="1">
    <location>
        <position position="128"/>
    </location>
    <ligand>
        <name>Cu cation</name>
        <dbReference type="ChEBI" id="CHEBI:23378"/>
        <label>Z3</label>
    </ligand>
</feature>
<feature type="binding site" evidence="1">
    <location>
        <position position="176"/>
    </location>
    <ligand>
        <name>Cu cation</name>
        <dbReference type="ChEBI" id="CHEBI:23378"/>
        <label>Z2</label>
    </ligand>
</feature>
<feature type="binding site" evidence="1">
    <location>
        <position position="254"/>
    </location>
    <ligand>
        <name>Ca(2+)</name>
        <dbReference type="ChEBI" id="CHEBI:29108"/>
        <label>2</label>
    </ligand>
</feature>
<feature type="binding site" evidence="1">
    <location>
        <position position="257"/>
    </location>
    <ligand>
        <name>Ca(2+)</name>
        <dbReference type="ChEBI" id="CHEBI:29108"/>
        <label>2</label>
    </ligand>
</feature>
<feature type="binding site" evidence="1">
    <location>
        <position position="265"/>
    </location>
    <ligand>
        <name>Ca(2+)</name>
        <dbReference type="ChEBI" id="CHEBI:29108"/>
        <label>2</label>
    </ligand>
</feature>
<feature type="binding site" evidence="1">
    <location>
        <position position="271"/>
    </location>
    <ligand>
        <name>Ca(2+)</name>
        <dbReference type="ChEBI" id="CHEBI:29108"/>
        <label>2</label>
    </ligand>
</feature>
<feature type="binding site" evidence="1">
    <location>
        <position position="322"/>
    </location>
    <ligand>
        <name>Ca(2+)</name>
        <dbReference type="ChEBI" id="CHEBI:29108"/>
        <label>2</label>
    </ligand>
</feature>
<feature type="binding site" evidence="1">
    <location>
        <position position="324"/>
    </location>
    <ligand>
        <name>Cu cation</name>
        <dbReference type="ChEBI" id="CHEBI:23378"/>
        <label>Z1</label>
    </ligand>
</feature>
<feature type="binding site" evidence="1">
    <location>
        <position position="380"/>
    </location>
    <ligand>
        <name>Cu cation</name>
        <dbReference type="ChEBI" id="CHEBI:23378"/>
        <label>Z1</label>
    </ligand>
</feature>
<feature type="binding site" evidence="1">
    <location>
        <position position="431"/>
    </location>
    <ligand>
        <name>Cu cation</name>
        <dbReference type="ChEBI" id="CHEBI:23378"/>
        <label>Z3</label>
    </ligand>
</feature>
<feature type="binding site" evidence="1">
    <location>
        <position position="452"/>
    </location>
    <ligand>
        <name>Ca(2+)</name>
        <dbReference type="ChEBI" id="CHEBI:29108"/>
        <label>1</label>
    </ligand>
</feature>
<feature type="binding site" evidence="1">
    <location>
        <position position="467"/>
    </location>
    <ligand>
        <name>Ca(2+)</name>
        <dbReference type="ChEBI" id="CHEBI:29108"/>
        <label>1</label>
    </ligand>
</feature>
<feature type="binding site" evidence="1">
    <location>
        <position position="492"/>
    </location>
    <ligand>
        <name>Cu cation</name>
        <dbReference type="ChEBI" id="CHEBI:23378"/>
        <label>Z4</label>
    </ligand>
</feature>
<feature type="binding site" evidence="1">
    <location>
        <position position="581"/>
    </location>
    <ligand>
        <name>Cu cation</name>
        <dbReference type="ChEBI" id="CHEBI:23378"/>
        <label>A1</label>
    </ligand>
</feature>
<feature type="binding site" evidence="1">
    <location>
        <position position="616"/>
    </location>
    <ligand>
        <name>Cu cation</name>
        <dbReference type="ChEBI" id="CHEBI:23378"/>
        <label>A1</label>
    </ligand>
</feature>
<feature type="binding site" evidence="1">
    <location>
        <position position="616"/>
    </location>
    <ligand>
        <name>Cu cation</name>
        <dbReference type="ChEBI" id="CHEBI:23378"/>
        <label>A2</label>
    </ligand>
</feature>
<feature type="binding site" evidence="1">
    <location>
        <position position="618"/>
    </location>
    <ligand>
        <name>Cu cation</name>
        <dbReference type="ChEBI" id="CHEBI:23378"/>
        <label>A2</label>
    </ligand>
</feature>
<feature type="binding site" evidence="1">
    <location>
        <position position="620"/>
    </location>
    <ligand>
        <name>Cu cation</name>
        <dbReference type="ChEBI" id="CHEBI:23378"/>
        <label>A1</label>
    </ligand>
</feature>
<feature type="binding site" evidence="1">
    <location>
        <position position="620"/>
    </location>
    <ligand>
        <name>Cu cation</name>
        <dbReference type="ChEBI" id="CHEBI:23378"/>
        <label>A2</label>
    </ligand>
</feature>
<feature type="binding site" evidence="1">
    <location>
        <position position="624"/>
    </location>
    <ligand>
        <name>Cu cation</name>
        <dbReference type="ChEBI" id="CHEBI:23378"/>
        <label>A2</label>
    </ligand>
</feature>
<feature type="binding site" evidence="1">
    <location>
        <position position="627"/>
    </location>
    <ligand>
        <name>Cu cation</name>
        <dbReference type="ChEBI" id="CHEBI:23378"/>
        <label>A1</label>
    </ligand>
</feature>
<gene>
    <name type="primary">nosZ</name>
    <name type="ordered locus">PA3392</name>
</gene>
<comment type="function">
    <text evidence="1">Nitrous-oxide reductase is part of a bacterial respiratory system which is activated under anaerobic conditions in the presence of nitrate or nitrous oxide.</text>
</comment>
<comment type="catalytic activity">
    <reaction>
        <text>N2 + 2 Fe(III)-[cytochrome c] + H2O = nitrous oxide + 2 Fe(II)-[cytochrome c] + 2 H(+)</text>
        <dbReference type="Rhea" id="RHEA:43108"/>
        <dbReference type="Rhea" id="RHEA-COMP:10350"/>
        <dbReference type="Rhea" id="RHEA-COMP:14399"/>
        <dbReference type="ChEBI" id="CHEBI:15377"/>
        <dbReference type="ChEBI" id="CHEBI:15378"/>
        <dbReference type="ChEBI" id="CHEBI:17045"/>
        <dbReference type="ChEBI" id="CHEBI:17997"/>
        <dbReference type="ChEBI" id="CHEBI:29033"/>
        <dbReference type="ChEBI" id="CHEBI:29034"/>
        <dbReference type="EC" id="1.7.2.4"/>
    </reaction>
</comment>
<comment type="cofactor">
    <cofactor evidence="1">
        <name>Ca(2+)</name>
        <dbReference type="ChEBI" id="CHEBI:29108"/>
    </cofactor>
    <text evidence="1">Binds 2 calcium ions per subunit.</text>
</comment>
<comment type="cofactor">
    <cofactor evidence="1">
        <name>Cu cation</name>
        <dbReference type="ChEBI" id="CHEBI:23378"/>
    </cofactor>
    <text evidence="1">Binds 6 Cu cations per subunit. Each subunit contains 2 copper centers; Cu(A) (binuclear) and Cu(Z) (tetranuclear). Cu(Z) is thought to be the site of nitrous oxide reduction.</text>
</comment>
<comment type="pathway">
    <text>Nitrogen metabolism; nitrate reduction (denitrification); dinitrogen from nitrate: step 4/4.</text>
</comment>
<comment type="subunit">
    <text evidence="1">Homodimer.</text>
</comment>
<comment type="subcellular location">
    <subcellularLocation>
        <location evidence="1">Periplasm</location>
    </subcellularLocation>
</comment>
<comment type="PTM">
    <text>Predicted to be exported by the Tat system. The position of the signal peptide cleavage has not been experimentally proven.</text>
</comment>
<comment type="similarity">
    <text evidence="4">Belongs to the NosZ family.</text>
</comment>
<comment type="similarity">
    <text evidence="4">In the C-terminal section; belongs to the cytochrome c oxidase subunit 2 family.</text>
</comment>
<proteinExistence type="inferred from homology"/>
<reference key="1">
    <citation type="journal article" date="2000" name="Nature">
        <title>Complete genome sequence of Pseudomonas aeruginosa PAO1, an opportunistic pathogen.</title>
        <authorList>
            <person name="Stover C.K."/>
            <person name="Pham X.-Q.T."/>
            <person name="Erwin A.L."/>
            <person name="Mizoguchi S.D."/>
            <person name="Warrener P."/>
            <person name="Hickey M.J."/>
            <person name="Brinkman F.S.L."/>
            <person name="Hufnagle W.O."/>
            <person name="Kowalik D.J."/>
            <person name="Lagrou M."/>
            <person name="Garber R.L."/>
            <person name="Goltry L."/>
            <person name="Tolentino E."/>
            <person name="Westbrock-Wadman S."/>
            <person name="Yuan Y."/>
            <person name="Brody L.L."/>
            <person name="Coulter S.N."/>
            <person name="Folger K.R."/>
            <person name="Kas A."/>
            <person name="Larbig K."/>
            <person name="Lim R.M."/>
            <person name="Smith K.A."/>
            <person name="Spencer D.H."/>
            <person name="Wong G.K.-S."/>
            <person name="Wu Z."/>
            <person name="Paulsen I.T."/>
            <person name="Reizer J."/>
            <person name="Saier M.H. Jr."/>
            <person name="Hancock R.E.W."/>
            <person name="Lory S."/>
            <person name="Olson M.V."/>
        </authorList>
    </citation>
    <scope>NUCLEOTIDE SEQUENCE [LARGE SCALE GENOMIC DNA]</scope>
    <source>
        <strain>ATCC 15692 / DSM 22644 / CIP 104116 / JCM 14847 / LMG 12228 / 1C / PRS 101 / PAO1</strain>
    </source>
</reference>
<accession>Q9HYL2</accession>
<protein>
    <recommendedName>
        <fullName>Nitrous-oxide reductase</fullName>
        <ecNumber>1.7.2.4</ecNumber>
    </recommendedName>
    <alternativeName>
        <fullName>N(2)OR</fullName>
    </alternativeName>
    <alternativeName>
        <fullName>N2O reductase</fullName>
    </alternativeName>
</protein>
<keyword id="KW-0106">Calcium</keyword>
<keyword id="KW-0186">Copper</keyword>
<keyword id="KW-0479">Metal-binding</keyword>
<keyword id="KW-0560">Oxidoreductase</keyword>
<keyword id="KW-0574">Periplasm</keyword>
<keyword id="KW-1185">Reference proteome</keyword>
<keyword id="KW-0732">Signal</keyword>